<comment type="function">
    <text evidence="1">Destroys superoxide anion radicals which are normally produced within the cells and which are toxic to biological systems.</text>
</comment>
<comment type="catalytic activity">
    <reaction>
        <text>2 superoxide + 2 H(+) = H2O2 + O2</text>
        <dbReference type="Rhea" id="RHEA:20696"/>
        <dbReference type="ChEBI" id="CHEBI:15378"/>
        <dbReference type="ChEBI" id="CHEBI:15379"/>
        <dbReference type="ChEBI" id="CHEBI:16240"/>
        <dbReference type="ChEBI" id="CHEBI:18421"/>
        <dbReference type="EC" id="1.15.1.1"/>
    </reaction>
</comment>
<comment type="cofactor">
    <cofactor evidence="1">
        <name>Mn(2+)</name>
        <dbReference type="ChEBI" id="CHEBI:29035"/>
    </cofactor>
    <text evidence="1">Binds 1 Mn(2+) ion per subunit.</text>
</comment>
<comment type="similarity">
    <text evidence="2">Belongs to the iron/manganese superoxide dismutase family.</text>
</comment>
<proteinExistence type="inferred from homology"/>
<organism>
    <name type="scientific">Xanthomonas campestris pv. campestris (strain ATCC 33913 / DSM 3586 / NCPPB 528 / LMG 568 / P 25)</name>
    <dbReference type="NCBI Taxonomy" id="190485"/>
    <lineage>
        <taxon>Bacteria</taxon>
        <taxon>Pseudomonadati</taxon>
        <taxon>Pseudomonadota</taxon>
        <taxon>Gammaproteobacteria</taxon>
        <taxon>Lysobacterales</taxon>
        <taxon>Lysobacteraceae</taxon>
        <taxon>Xanthomonas</taxon>
    </lineage>
</organism>
<reference key="1">
    <citation type="journal article" date="2002" name="Nature">
        <title>Comparison of the genomes of two Xanthomonas pathogens with differing host specificities.</title>
        <authorList>
            <person name="da Silva A.C.R."/>
            <person name="Ferro J.A."/>
            <person name="Reinach F.C."/>
            <person name="Farah C.S."/>
            <person name="Furlan L.R."/>
            <person name="Quaggio R.B."/>
            <person name="Monteiro-Vitorello C.B."/>
            <person name="Van Sluys M.A."/>
            <person name="Almeida N.F. Jr."/>
            <person name="Alves L.M.C."/>
            <person name="do Amaral A.M."/>
            <person name="Bertolini M.C."/>
            <person name="Camargo L.E.A."/>
            <person name="Camarotte G."/>
            <person name="Cannavan F."/>
            <person name="Cardozo J."/>
            <person name="Chambergo F."/>
            <person name="Ciapina L.P."/>
            <person name="Cicarelli R.M.B."/>
            <person name="Coutinho L.L."/>
            <person name="Cursino-Santos J.R."/>
            <person name="El-Dorry H."/>
            <person name="Faria J.B."/>
            <person name="Ferreira A.J.S."/>
            <person name="Ferreira R.C.C."/>
            <person name="Ferro M.I.T."/>
            <person name="Formighieri E.F."/>
            <person name="Franco M.C."/>
            <person name="Greggio C.C."/>
            <person name="Gruber A."/>
            <person name="Katsuyama A.M."/>
            <person name="Kishi L.T."/>
            <person name="Leite R.P."/>
            <person name="Lemos E.G.M."/>
            <person name="Lemos M.V.F."/>
            <person name="Locali E.C."/>
            <person name="Machado M.A."/>
            <person name="Madeira A.M.B.N."/>
            <person name="Martinez-Rossi N.M."/>
            <person name="Martins E.C."/>
            <person name="Meidanis J."/>
            <person name="Menck C.F.M."/>
            <person name="Miyaki C.Y."/>
            <person name="Moon D.H."/>
            <person name="Moreira L.M."/>
            <person name="Novo M.T.M."/>
            <person name="Okura V.K."/>
            <person name="Oliveira M.C."/>
            <person name="Oliveira V.R."/>
            <person name="Pereira H.A."/>
            <person name="Rossi A."/>
            <person name="Sena J.A.D."/>
            <person name="Silva C."/>
            <person name="de Souza R.F."/>
            <person name="Spinola L.A.F."/>
            <person name="Takita M.A."/>
            <person name="Tamura R.E."/>
            <person name="Teixeira E.C."/>
            <person name="Tezza R.I.D."/>
            <person name="Trindade dos Santos M."/>
            <person name="Truffi D."/>
            <person name="Tsai S.M."/>
            <person name="White F.F."/>
            <person name="Setubal J.C."/>
            <person name="Kitajima J.P."/>
        </authorList>
    </citation>
    <scope>NUCLEOTIDE SEQUENCE [LARGE SCALE GENOMIC DNA]</scope>
    <source>
        <strain>ATCC 33913 / DSM 3586 / NCPPB 528 / LMG 568 / P 25</strain>
    </source>
</reference>
<name>SODM_XANCP</name>
<sequence>MAYTLPQLPYAYDALEPNIDAQTMEIHHTKHHQTYINNVNAALEGTEYADLPVEELVSKLKSLPENLQGPVRNNGGGHANHSLFWTVMSPNGGGEPKGEVAKAIDKDIGGFEKFKEAFTKAALSRFGSGWAWLSVTPDKKVVVESTANQDSPLFEGNTPILGLDVWEHAYYLKYQNRRPDYIGAFYNVVNWDEVERRYHAAIA</sequence>
<dbReference type="EC" id="1.15.1.1"/>
<dbReference type="EMBL" id="AE008922">
    <property type="protein sequence ID" value="AAM41557.1"/>
    <property type="molecule type" value="Genomic_DNA"/>
</dbReference>
<dbReference type="RefSeq" id="NP_637633.1">
    <property type="nucleotide sequence ID" value="NC_003902.1"/>
</dbReference>
<dbReference type="RefSeq" id="WP_011037422.1">
    <property type="nucleotide sequence ID" value="NC_003902.1"/>
</dbReference>
<dbReference type="SMR" id="P0C0F8"/>
<dbReference type="STRING" id="190485.XCC2278"/>
<dbReference type="EnsemblBacteria" id="AAM41557">
    <property type="protein sequence ID" value="AAM41557"/>
    <property type="gene ID" value="XCC2278"/>
</dbReference>
<dbReference type="KEGG" id="xcc:XCC2278"/>
<dbReference type="PATRIC" id="fig|190485.4.peg.2428"/>
<dbReference type="eggNOG" id="COG0605">
    <property type="taxonomic scope" value="Bacteria"/>
</dbReference>
<dbReference type="HOGENOM" id="CLU_031625_0_1_6"/>
<dbReference type="OrthoDB" id="9803125at2"/>
<dbReference type="Proteomes" id="UP000001010">
    <property type="component" value="Chromosome"/>
</dbReference>
<dbReference type="GO" id="GO:0005737">
    <property type="term" value="C:cytoplasm"/>
    <property type="evidence" value="ECO:0000318"/>
    <property type="project" value="GO_Central"/>
</dbReference>
<dbReference type="GO" id="GO:0046872">
    <property type="term" value="F:metal ion binding"/>
    <property type="evidence" value="ECO:0007669"/>
    <property type="project" value="UniProtKB-KW"/>
</dbReference>
<dbReference type="GO" id="GO:0004784">
    <property type="term" value="F:superoxide dismutase activity"/>
    <property type="evidence" value="ECO:0000318"/>
    <property type="project" value="GO_Central"/>
</dbReference>
<dbReference type="GO" id="GO:0019430">
    <property type="term" value="P:removal of superoxide radicals"/>
    <property type="evidence" value="ECO:0000318"/>
    <property type="project" value="GO_Central"/>
</dbReference>
<dbReference type="FunFam" id="1.10.287.990:FF:000001">
    <property type="entry name" value="Superoxide dismutase"/>
    <property type="match status" value="1"/>
</dbReference>
<dbReference type="FunFam" id="3.55.40.20:FF:000001">
    <property type="entry name" value="Superoxide dismutase"/>
    <property type="match status" value="1"/>
</dbReference>
<dbReference type="Gene3D" id="1.10.287.990">
    <property type="entry name" value="Fe,Mn superoxide dismutase (SOD) domain"/>
    <property type="match status" value="1"/>
</dbReference>
<dbReference type="Gene3D" id="3.55.40.20">
    <property type="entry name" value="Iron/manganese superoxide dismutase, C-terminal domain"/>
    <property type="match status" value="1"/>
</dbReference>
<dbReference type="InterPro" id="IPR001189">
    <property type="entry name" value="Mn/Fe_SOD"/>
</dbReference>
<dbReference type="InterPro" id="IPR019833">
    <property type="entry name" value="Mn/Fe_SOD_BS"/>
</dbReference>
<dbReference type="InterPro" id="IPR019832">
    <property type="entry name" value="Mn/Fe_SOD_C"/>
</dbReference>
<dbReference type="InterPro" id="IPR019831">
    <property type="entry name" value="Mn/Fe_SOD_N"/>
</dbReference>
<dbReference type="InterPro" id="IPR036324">
    <property type="entry name" value="Mn/Fe_SOD_N_sf"/>
</dbReference>
<dbReference type="InterPro" id="IPR036314">
    <property type="entry name" value="SOD_C_sf"/>
</dbReference>
<dbReference type="PANTHER" id="PTHR43595">
    <property type="entry name" value="37S RIBOSOMAL PROTEIN S26, MITOCHONDRIAL"/>
    <property type="match status" value="1"/>
</dbReference>
<dbReference type="PANTHER" id="PTHR43595:SF2">
    <property type="entry name" value="SMALL RIBOSOMAL SUBUNIT PROTEIN MS42"/>
    <property type="match status" value="1"/>
</dbReference>
<dbReference type="Pfam" id="PF02777">
    <property type="entry name" value="Sod_Fe_C"/>
    <property type="match status" value="1"/>
</dbReference>
<dbReference type="Pfam" id="PF00081">
    <property type="entry name" value="Sod_Fe_N"/>
    <property type="match status" value="1"/>
</dbReference>
<dbReference type="PIRSF" id="PIRSF000349">
    <property type="entry name" value="SODismutase"/>
    <property type="match status" value="1"/>
</dbReference>
<dbReference type="PRINTS" id="PR01703">
    <property type="entry name" value="MNSODISMTASE"/>
</dbReference>
<dbReference type="SUPFAM" id="SSF54719">
    <property type="entry name" value="Fe,Mn superoxide dismutase (SOD), C-terminal domain"/>
    <property type="match status" value="1"/>
</dbReference>
<dbReference type="SUPFAM" id="SSF46609">
    <property type="entry name" value="Fe,Mn superoxide dismutase (SOD), N-terminal domain"/>
    <property type="match status" value="1"/>
</dbReference>
<dbReference type="PROSITE" id="PS00088">
    <property type="entry name" value="SOD_MN"/>
    <property type="match status" value="1"/>
</dbReference>
<feature type="chain" id="PRO_0000160109" description="Superoxide dismutase [Mn]">
    <location>
        <begin position="1"/>
        <end position="203"/>
    </location>
</feature>
<feature type="binding site" evidence="1">
    <location>
        <position position="27"/>
    </location>
    <ligand>
        <name>Mn(2+)</name>
        <dbReference type="ChEBI" id="CHEBI:29035"/>
    </ligand>
</feature>
<feature type="binding site" evidence="1">
    <location>
        <position position="81"/>
    </location>
    <ligand>
        <name>Mn(2+)</name>
        <dbReference type="ChEBI" id="CHEBI:29035"/>
    </ligand>
</feature>
<feature type="binding site" evidence="1">
    <location>
        <position position="164"/>
    </location>
    <ligand>
        <name>Mn(2+)</name>
        <dbReference type="ChEBI" id="CHEBI:29035"/>
    </ligand>
</feature>
<feature type="binding site" evidence="1">
    <location>
        <position position="168"/>
    </location>
    <ligand>
        <name>Mn(2+)</name>
        <dbReference type="ChEBI" id="CHEBI:29035"/>
    </ligand>
</feature>
<protein>
    <recommendedName>
        <fullName>Superoxide dismutase [Mn]</fullName>
        <ecNumber>1.15.1.1</ecNumber>
    </recommendedName>
</protein>
<accession>P0C0F8</accession>
<accession>P53654</accession>
<evidence type="ECO:0000250" key="1"/>
<evidence type="ECO:0000305" key="2"/>
<keyword id="KW-0464">Manganese</keyword>
<keyword id="KW-0479">Metal-binding</keyword>
<keyword id="KW-0560">Oxidoreductase</keyword>
<keyword id="KW-1185">Reference proteome</keyword>
<gene>
    <name type="primary">sodA</name>
    <name type="synonym">sodM</name>
    <name type="ordered locus">XCC2278</name>
</gene>